<keyword id="KW-0050">Antiport</keyword>
<keyword id="KW-0333">Golgi apparatus</keyword>
<keyword id="KW-0472">Membrane</keyword>
<keyword id="KW-0762">Sugar transport</keyword>
<keyword id="KW-0812">Transmembrane</keyword>
<keyword id="KW-1133">Transmembrane helix</keyword>
<keyword id="KW-0813">Transport</keyword>
<evidence type="ECO:0000250" key="1">
    <source>
        <dbReference type="UniProtKB" id="P78382"/>
    </source>
</evidence>
<evidence type="ECO:0000250" key="2">
    <source>
        <dbReference type="UniProtKB" id="Q61420"/>
    </source>
</evidence>
<evidence type="ECO:0000269" key="3">
    <source>
    </source>
</evidence>
<evidence type="ECO:0000303" key="4">
    <source>
    </source>
</evidence>
<evidence type="ECO:0000305" key="5"/>
<reference key="1">
    <citation type="journal article" date="1997" name="Eur. J. Biochem.">
        <title>Molecular cloning of the hamster CMP-sialic acid transporter.</title>
        <authorList>
            <person name="Eckhardt M."/>
            <person name="Gerardy-Schahn R."/>
        </authorList>
    </citation>
    <scope>NUCLEOTIDE SEQUENCE [MRNA]</scope>
    <scope>FUNCTION</scope>
    <scope>SUBCELLULAR LOCATION</scope>
    <scope>TRANSPORTER ACTIVITY</scope>
</reference>
<dbReference type="EMBL" id="Y12074">
    <property type="protein sequence ID" value="CAA72794.1"/>
    <property type="molecule type" value="mRNA"/>
</dbReference>
<dbReference type="RefSeq" id="NP_001233684.1">
    <property type="nucleotide sequence ID" value="NM_001246755.1"/>
</dbReference>
<dbReference type="SMR" id="O08520"/>
<dbReference type="PaxDb" id="10029-NP_001233684.1"/>
<dbReference type="Ensembl" id="ENSCGRT00001025160.1">
    <property type="protein sequence ID" value="ENSCGRP00001020916.1"/>
    <property type="gene ID" value="ENSCGRG00001019920.1"/>
</dbReference>
<dbReference type="GeneID" id="100689322"/>
<dbReference type="KEGG" id="cge:100689322"/>
<dbReference type="CTD" id="10559"/>
<dbReference type="eggNOG" id="KOG2234">
    <property type="taxonomic scope" value="Eukaryota"/>
</dbReference>
<dbReference type="GeneTree" id="ENSGT00950000182827"/>
<dbReference type="OrthoDB" id="408493at2759"/>
<dbReference type="Proteomes" id="UP000694386">
    <property type="component" value="Unplaced"/>
</dbReference>
<dbReference type="Proteomes" id="UP001108280">
    <property type="component" value="Chromosome 2"/>
</dbReference>
<dbReference type="GO" id="GO:0000139">
    <property type="term" value="C:Golgi membrane"/>
    <property type="evidence" value="ECO:0000314"/>
    <property type="project" value="UniProtKB"/>
</dbReference>
<dbReference type="GO" id="GO:0016020">
    <property type="term" value="C:membrane"/>
    <property type="evidence" value="ECO:0000250"/>
    <property type="project" value="UniProtKB"/>
</dbReference>
<dbReference type="GO" id="GO:0015297">
    <property type="term" value="F:antiporter activity"/>
    <property type="evidence" value="ECO:0000250"/>
    <property type="project" value="UniProtKB"/>
</dbReference>
<dbReference type="GO" id="GO:0005456">
    <property type="term" value="F:CMP-N-acetylneuraminate transmembrane transporter activity"/>
    <property type="evidence" value="ECO:0000314"/>
    <property type="project" value="UniProtKB"/>
</dbReference>
<dbReference type="GO" id="GO:0006055">
    <property type="term" value="P:CMP-N-acetylneuraminate biosynthetic process"/>
    <property type="evidence" value="ECO:0007669"/>
    <property type="project" value="Ensembl"/>
</dbReference>
<dbReference type="GO" id="GO:0015782">
    <property type="term" value="P:CMP-N-acetylneuraminate transmembrane transport"/>
    <property type="evidence" value="ECO:0000250"/>
    <property type="project" value="UniProtKB"/>
</dbReference>
<dbReference type="GO" id="GO:0006054">
    <property type="term" value="P:N-acetylneuraminate metabolic process"/>
    <property type="evidence" value="ECO:0007669"/>
    <property type="project" value="Ensembl"/>
</dbReference>
<dbReference type="InterPro" id="IPR007271">
    <property type="entry name" value="Nuc_sug_transpt"/>
</dbReference>
<dbReference type="NCBIfam" id="TIGR00803">
    <property type="entry name" value="nst"/>
    <property type="match status" value="1"/>
</dbReference>
<dbReference type="PANTHER" id="PTHR10231">
    <property type="entry name" value="NUCLEOTIDE-SUGAR TRANSMEMBRANE TRANSPORTER"/>
    <property type="match status" value="1"/>
</dbReference>
<dbReference type="Pfam" id="PF04142">
    <property type="entry name" value="Nuc_sug_transp"/>
    <property type="match status" value="1"/>
</dbReference>
<dbReference type="PIRSF" id="PIRSF005799">
    <property type="entry name" value="UDP-gal_transpt"/>
    <property type="match status" value="1"/>
</dbReference>
<dbReference type="SUPFAM" id="SSF103481">
    <property type="entry name" value="Multidrug resistance efflux transporter EmrE"/>
    <property type="match status" value="1"/>
</dbReference>
<feature type="chain" id="PRO_0000213350" description="CMP-sialic acid transporter">
    <location>
        <begin position="1"/>
        <end position="336"/>
    </location>
</feature>
<feature type="topological domain" description="Cytoplasmic" evidence="5">
    <location>
        <begin position="1"/>
        <end position="9"/>
    </location>
</feature>
<feature type="transmembrane region" description="Helical" evidence="2">
    <location>
        <begin position="10"/>
        <end position="30"/>
    </location>
</feature>
<feature type="topological domain" description="Lumenal" evidence="5">
    <location>
        <begin position="31"/>
        <end position="45"/>
    </location>
</feature>
<feature type="transmembrane region" description="Helical" evidence="2">
    <location>
        <begin position="46"/>
        <end position="64"/>
    </location>
</feature>
<feature type="topological domain" description="Cytoplasmic" evidence="5">
    <location>
        <begin position="65"/>
        <end position="87"/>
    </location>
</feature>
<feature type="transmembrane region" description="Helical" evidence="2">
    <location>
        <begin position="88"/>
        <end position="108"/>
    </location>
</feature>
<feature type="topological domain" description="Lumenal" evidence="5">
    <location>
        <begin position="109"/>
        <end position="114"/>
    </location>
</feature>
<feature type="transmembrane region" description="Helical" evidence="2">
    <location>
        <begin position="115"/>
        <end position="135"/>
    </location>
</feature>
<feature type="topological domain" description="Cytoplasmic" evidence="5">
    <location>
        <begin position="136"/>
        <end position="141"/>
    </location>
</feature>
<feature type="transmembrane region" description="Helical" evidence="2">
    <location>
        <begin position="142"/>
        <end position="160"/>
    </location>
</feature>
<feature type="topological domain" description="Lumenal" evidence="5">
    <location>
        <begin position="161"/>
        <end position="175"/>
    </location>
</feature>
<feature type="transmembrane region" description="Helical" evidence="2">
    <location>
        <begin position="176"/>
        <end position="196"/>
    </location>
</feature>
<feature type="topological domain" description="Cytoplasmic" evidence="5">
    <location>
        <begin position="197"/>
        <end position="209"/>
    </location>
</feature>
<feature type="transmembrane region" description="Helical" evidence="2">
    <location>
        <begin position="210"/>
        <end position="228"/>
    </location>
</feature>
<feature type="topological domain" description="Lumenal" evidence="5">
    <location>
        <begin position="229"/>
        <end position="243"/>
    </location>
</feature>
<feature type="transmembrane region" description="Helical" evidence="2">
    <location>
        <begin position="244"/>
        <end position="262"/>
    </location>
</feature>
<feature type="topological domain" description="Cytoplasmic" evidence="5">
    <location>
        <begin position="263"/>
        <end position="269"/>
    </location>
</feature>
<feature type="transmembrane region" description="Helical" evidence="2">
    <location>
        <begin position="270"/>
        <end position="288"/>
    </location>
</feature>
<feature type="topological domain" description="Lumenal" evidence="5">
    <location>
        <begin position="289"/>
        <end position="296"/>
    </location>
</feature>
<feature type="transmembrane region" description="Helical" evidence="2">
    <location>
        <begin position="297"/>
        <end position="315"/>
    </location>
</feature>
<feature type="topological domain" description="Cytoplasmic" evidence="5">
    <location>
        <begin position="316"/>
        <end position="336"/>
    </location>
</feature>
<feature type="region of interest" description="Disordered" evidence="2">
    <location>
        <begin position="316"/>
        <end position="336"/>
    </location>
</feature>
<feature type="binding site" evidence="2">
    <location>
        <position position="55"/>
    </location>
    <ligand>
        <name>CMP-N-acetyl-beta-neuraminate</name>
        <dbReference type="ChEBI" id="CHEBI:57812"/>
    </ligand>
</feature>
<feature type="binding site" evidence="2">
    <location>
        <begin position="101"/>
        <end position="102"/>
    </location>
    <ligand>
        <name>CMP-N-acetyl-beta-neuraminate</name>
        <dbReference type="ChEBI" id="CHEBI:57812"/>
    </ligand>
</feature>
<feature type="binding site" evidence="2">
    <location>
        <begin position="117"/>
        <end position="124"/>
    </location>
    <ligand>
        <name>CMP-N-acetyl-beta-neuraminate</name>
        <dbReference type="ChEBI" id="CHEBI:57812"/>
    </ligand>
</feature>
<feature type="binding site" evidence="2">
    <location>
        <position position="188"/>
    </location>
    <ligand>
        <name>CMP-N-acetyl-beta-neuraminate</name>
        <dbReference type="ChEBI" id="CHEBI:57812"/>
    </ligand>
</feature>
<feature type="binding site" evidence="2">
    <location>
        <begin position="210"/>
        <end position="214"/>
    </location>
    <ligand>
        <name>CMP-N-acetyl-beta-neuraminate</name>
        <dbReference type="ChEBI" id="CHEBI:57812"/>
    </ligand>
</feature>
<feature type="binding site" evidence="2">
    <location>
        <position position="272"/>
    </location>
    <ligand>
        <name>CMP-N-acetyl-beta-neuraminate</name>
        <dbReference type="ChEBI" id="CHEBI:57812"/>
    </ligand>
</feature>
<sequence>MAQARENVSLFFKLYCLAVMTLVAAAYTVALRYTRTTAKELYFSTTAVCVTEVIKLLISVGLLAKETGSLGRFKASLSENVLGSPKELMKLSVPSLVYAVQNNMAFLALSNLDAAVYQVTYQLKIPCTALCTVLMLNRTLSKLQWVSVFMLCGGVILVQWKPAQATKVVVEQSPLLGFGAIAIAVLCSGFAGVYFEKVLKSSDTSLWVRNIQMYLSGIVVTLVGTYLSDGAEIKEKGFFYGYTYYVWFVIFLASVGGLYTSVVVKYTDNIMKGFSAAAAIVLSTIASVMLFGLQITLSFAMGALLVCISIYLYGLPRQDTTCIQQEATSKERVIGV</sequence>
<protein>
    <recommendedName>
        <fullName evidence="4">CMP-sialic acid transporter</fullName>
        <shortName>CMP-SA-Tr</shortName>
        <shortName evidence="4">CMP-Sia-Tr</shortName>
    </recommendedName>
    <alternativeName>
        <fullName>Solute carrier family 35 member A1</fullName>
    </alternativeName>
</protein>
<comment type="function">
    <text evidence="1 2 3">Transports CMP-sialic acid from the cytosol into the Golgi apparatus, functioning as an antiporter that exchanges CMP-sialic acid for CMP (PubMed:9310377). Binds both CMP-sialic acid and free CMP, but has higher affinity for free CMP (By similarity). Also able to exchange CMP-sialic acid for AMP and UMP (By similarity). Also mediates the transport of CDP-ribitol (By similarity).</text>
</comment>
<comment type="catalytic activity">
    <reaction evidence="3">
        <text>CMP-N-acetyl-beta-neuraminate(in) + CMP(out) = CMP-N-acetyl-beta-neuraminate(out) + CMP(in)</text>
        <dbReference type="Rhea" id="RHEA:67724"/>
        <dbReference type="ChEBI" id="CHEBI:57812"/>
        <dbReference type="ChEBI" id="CHEBI:60377"/>
    </reaction>
</comment>
<comment type="catalytic activity">
    <reaction evidence="1">
        <text>CMP-N-acetyl-beta-neuraminate(in) + AMP(out) = CMP-N-acetyl-beta-neuraminate(out) + AMP(in)</text>
        <dbReference type="Rhea" id="RHEA:74639"/>
        <dbReference type="ChEBI" id="CHEBI:57812"/>
        <dbReference type="ChEBI" id="CHEBI:456215"/>
    </reaction>
</comment>
<comment type="catalytic activity">
    <reaction evidence="2">
        <text>CDP-L-ribitol(in) + CDP(out) = CDP-L-ribitol(out) + CDP(in)</text>
        <dbReference type="Rhea" id="RHEA:71579"/>
        <dbReference type="ChEBI" id="CHEBI:57608"/>
        <dbReference type="ChEBI" id="CHEBI:58069"/>
    </reaction>
</comment>
<comment type="catalytic activity">
    <reaction evidence="1">
        <text>UMP(out) + CMP-N-acetyl-beta-neuraminate(in) = UMP(in) + CMP-N-acetyl-beta-neuraminate(out)</text>
        <dbReference type="Rhea" id="RHEA:74643"/>
        <dbReference type="ChEBI" id="CHEBI:57812"/>
        <dbReference type="ChEBI" id="CHEBI:57865"/>
    </reaction>
</comment>
<comment type="subunit">
    <text evidence="1">Monomer.</text>
</comment>
<comment type="subcellular location">
    <subcellularLocation>
        <location evidence="3">Golgi apparatus membrane</location>
        <topology evidence="5">Multi-pass membrane protein</topology>
    </subcellularLocation>
</comment>
<comment type="similarity">
    <text evidence="5">Belongs to the nucleotide-sugar transporter family. SLC35A subfamily.</text>
</comment>
<organism>
    <name type="scientific">Cricetulus griseus</name>
    <name type="common">Chinese hamster</name>
    <name type="synonym">Cricetulus barabensis griseus</name>
    <dbReference type="NCBI Taxonomy" id="10029"/>
    <lineage>
        <taxon>Eukaryota</taxon>
        <taxon>Metazoa</taxon>
        <taxon>Chordata</taxon>
        <taxon>Craniata</taxon>
        <taxon>Vertebrata</taxon>
        <taxon>Euteleostomi</taxon>
        <taxon>Mammalia</taxon>
        <taxon>Eutheria</taxon>
        <taxon>Euarchontoglires</taxon>
        <taxon>Glires</taxon>
        <taxon>Rodentia</taxon>
        <taxon>Myomorpha</taxon>
        <taxon>Muroidea</taxon>
        <taxon>Cricetidae</taxon>
        <taxon>Cricetinae</taxon>
        <taxon>Cricetulus</taxon>
    </lineage>
</organism>
<accession>O08520</accession>
<gene>
    <name type="primary">SLC35A1</name>
</gene>
<proteinExistence type="evidence at transcript level"/>
<name>S35A1_CRIGR</name>